<accession>B8IZF5</accession>
<dbReference type="EC" id="6.3.4.2" evidence="1"/>
<dbReference type="EMBL" id="CP001358">
    <property type="protein sequence ID" value="ACL48882.1"/>
    <property type="molecule type" value="Genomic_DNA"/>
</dbReference>
<dbReference type="SMR" id="B8IZF5"/>
<dbReference type="STRING" id="525146.Ddes_0975"/>
<dbReference type="MEROPS" id="C26.964"/>
<dbReference type="KEGG" id="dds:Ddes_0975"/>
<dbReference type="eggNOG" id="COG0504">
    <property type="taxonomic scope" value="Bacteria"/>
</dbReference>
<dbReference type="HOGENOM" id="CLU_011675_5_0_7"/>
<dbReference type="UniPathway" id="UPA00159">
    <property type="reaction ID" value="UER00277"/>
</dbReference>
<dbReference type="GO" id="GO:0005829">
    <property type="term" value="C:cytosol"/>
    <property type="evidence" value="ECO:0007669"/>
    <property type="project" value="TreeGrafter"/>
</dbReference>
<dbReference type="GO" id="GO:0005524">
    <property type="term" value="F:ATP binding"/>
    <property type="evidence" value="ECO:0007669"/>
    <property type="project" value="UniProtKB-KW"/>
</dbReference>
<dbReference type="GO" id="GO:0003883">
    <property type="term" value="F:CTP synthase activity"/>
    <property type="evidence" value="ECO:0007669"/>
    <property type="project" value="UniProtKB-UniRule"/>
</dbReference>
<dbReference type="GO" id="GO:0004359">
    <property type="term" value="F:glutaminase activity"/>
    <property type="evidence" value="ECO:0007669"/>
    <property type="project" value="RHEA"/>
</dbReference>
<dbReference type="GO" id="GO:0042802">
    <property type="term" value="F:identical protein binding"/>
    <property type="evidence" value="ECO:0007669"/>
    <property type="project" value="TreeGrafter"/>
</dbReference>
<dbReference type="GO" id="GO:0046872">
    <property type="term" value="F:metal ion binding"/>
    <property type="evidence" value="ECO:0007669"/>
    <property type="project" value="UniProtKB-KW"/>
</dbReference>
<dbReference type="GO" id="GO:0044210">
    <property type="term" value="P:'de novo' CTP biosynthetic process"/>
    <property type="evidence" value="ECO:0007669"/>
    <property type="project" value="UniProtKB-UniRule"/>
</dbReference>
<dbReference type="GO" id="GO:0019856">
    <property type="term" value="P:pyrimidine nucleobase biosynthetic process"/>
    <property type="evidence" value="ECO:0007669"/>
    <property type="project" value="TreeGrafter"/>
</dbReference>
<dbReference type="CDD" id="cd03113">
    <property type="entry name" value="CTPS_N"/>
    <property type="match status" value="1"/>
</dbReference>
<dbReference type="CDD" id="cd01746">
    <property type="entry name" value="GATase1_CTP_Synthase"/>
    <property type="match status" value="1"/>
</dbReference>
<dbReference type="FunFam" id="3.40.50.300:FF:000009">
    <property type="entry name" value="CTP synthase"/>
    <property type="match status" value="1"/>
</dbReference>
<dbReference type="FunFam" id="3.40.50.880:FF:000002">
    <property type="entry name" value="CTP synthase"/>
    <property type="match status" value="1"/>
</dbReference>
<dbReference type="Gene3D" id="3.40.50.880">
    <property type="match status" value="1"/>
</dbReference>
<dbReference type="Gene3D" id="3.40.50.300">
    <property type="entry name" value="P-loop containing nucleotide triphosphate hydrolases"/>
    <property type="match status" value="1"/>
</dbReference>
<dbReference type="HAMAP" id="MF_01227">
    <property type="entry name" value="PyrG"/>
    <property type="match status" value="1"/>
</dbReference>
<dbReference type="InterPro" id="IPR029062">
    <property type="entry name" value="Class_I_gatase-like"/>
</dbReference>
<dbReference type="InterPro" id="IPR004468">
    <property type="entry name" value="CTP_synthase"/>
</dbReference>
<dbReference type="InterPro" id="IPR017456">
    <property type="entry name" value="CTP_synthase_N"/>
</dbReference>
<dbReference type="InterPro" id="IPR017926">
    <property type="entry name" value="GATASE"/>
</dbReference>
<dbReference type="InterPro" id="IPR033828">
    <property type="entry name" value="GATase1_CTP_Synthase"/>
</dbReference>
<dbReference type="InterPro" id="IPR027417">
    <property type="entry name" value="P-loop_NTPase"/>
</dbReference>
<dbReference type="NCBIfam" id="NF003792">
    <property type="entry name" value="PRK05380.1"/>
    <property type="match status" value="1"/>
</dbReference>
<dbReference type="NCBIfam" id="TIGR00337">
    <property type="entry name" value="PyrG"/>
    <property type="match status" value="1"/>
</dbReference>
<dbReference type="PANTHER" id="PTHR11550">
    <property type="entry name" value="CTP SYNTHASE"/>
    <property type="match status" value="1"/>
</dbReference>
<dbReference type="PANTHER" id="PTHR11550:SF0">
    <property type="entry name" value="CTP SYNTHASE-RELATED"/>
    <property type="match status" value="1"/>
</dbReference>
<dbReference type="Pfam" id="PF06418">
    <property type="entry name" value="CTP_synth_N"/>
    <property type="match status" value="1"/>
</dbReference>
<dbReference type="Pfam" id="PF00117">
    <property type="entry name" value="GATase"/>
    <property type="match status" value="1"/>
</dbReference>
<dbReference type="SUPFAM" id="SSF52317">
    <property type="entry name" value="Class I glutamine amidotransferase-like"/>
    <property type="match status" value="1"/>
</dbReference>
<dbReference type="SUPFAM" id="SSF52540">
    <property type="entry name" value="P-loop containing nucleoside triphosphate hydrolases"/>
    <property type="match status" value="1"/>
</dbReference>
<dbReference type="PROSITE" id="PS51273">
    <property type="entry name" value="GATASE_TYPE_1"/>
    <property type="match status" value="1"/>
</dbReference>
<comment type="function">
    <text evidence="1">Catalyzes the ATP-dependent amination of UTP to CTP with either L-glutamine or ammonia as the source of nitrogen. Regulates intracellular CTP levels through interactions with the four ribonucleotide triphosphates.</text>
</comment>
<comment type="catalytic activity">
    <reaction evidence="1">
        <text>UTP + L-glutamine + ATP + H2O = CTP + L-glutamate + ADP + phosphate + 2 H(+)</text>
        <dbReference type="Rhea" id="RHEA:26426"/>
        <dbReference type="ChEBI" id="CHEBI:15377"/>
        <dbReference type="ChEBI" id="CHEBI:15378"/>
        <dbReference type="ChEBI" id="CHEBI:29985"/>
        <dbReference type="ChEBI" id="CHEBI:30616"/>
        <dbReference type="ChEBI" id="CHEBI:37563"/>
        <dbReference type="ChEBI" id="CHEBI:43474"/>
        <dbReference type="ChEBI" id="CHEBI:46398"/>
        <dbReference type="ChEBI" id="CHEBI:58359"/>
        <dbReference type="ChEBI" id="CHEBI:456216"/>
        <dbReference type="EC" id="6.3.4.2"/>
    </reaction>
</comment>
<comment type="catalytic activity">
    <reaction evidence="1">
        <text>L-glutamine + H2O = L-glutamate + NH4(+)</text>
        <dbReference type="Rhea" id="RHEA:15889"/>
        <dbReference type="ChEBI" id="CHEBI:15377"/>
        <dbReference type="ChEBI" id="CHEBI:28938"/>
        <dbReference type="ChEBI" id="CHEBI:29985"/>
        <dbReference type="ChEBI" id="CHEBI:58359"/>
    </reaction>
</comment>
<comment type="catalytic activity">
    <reaction evidence="1">
        <text>UTP + NH4(+) + ATP = CTP + ADP + phosphate + 2 H(+)</text>
        <dbReference type="Rhea" id="RHEA:16597"/>
        <dbReference type="ChEBI" id="CHEBI:15378"/>
        <dbReference type="ChEBI" id="CHEBI:28938"/>
        <dbReference type="ChEBI" id="CHEBI:30616"/>
        <dbReference type="ChEBI" id="CHEBI:37563"/>
        <dbReference type="ChEBI" id="CHEBI:43474"/>
        <dbReference type="ChEBI" id="CHEBI:46398"/>
        <dbReference type="ChEBI" id="CHEBI:456216"/>
    </reaction>
</comment>
<comment type="activity regulation">
    <text evidence="1">Allosterically activated by GTP, when glutamine is the substrate; GTP has no effect on the reaction when ammonia is the substrate. The allosteric effector GTP functions by stabilizing the protein conformation that binds the tetrahedral intermediate(s) formed during glutamine hydrolysis. Inhibited by the product CTP, via allosteric rather than competitive inhibition.</text>
</comment>
<comment type="pathway">
    <text evidence="1">Pyrimidine metabolism; CTP biosynthesis via de novo pathway; CTP from UDP: step 2/2.</text>
</comment>
<comment type="subunit">
    <text evidence="1">Homotetramer.</text>
</comment>
<comment type="miscellaneous">
    <text evidence="1">CTPSs have evolved a hybrid strategy for distinguishing between UTP and CTP. The overlapping regions of the product feedback inhibitory and substrate sites recognize a common feature in both compounds, the triphosphate moiety. To differentiate isosteric substrate and product pyrimidine rings, an additional pocket far from the expected kinase/ligase catalytic site, specifically recognizes the cytosine and ribose portions of the product inhibitor.</text>
</comment>
<comment type="similarity">
    <text evidence="1">Belongs to the CTP synthase family.</text>
</comment>
<name>PYRG_DESDA</name>
<reference key="1">
    <citation type="submission" date="2009-01" db="EMBL/GenBank/DDBJ databases">
        <title>Complete sequence of Desulfovibrio desulfuricans subsp. desulfuricans str. ATCC 27774.</title>
        <authorList>
            <consortium name="US DOE Joint Genome Institute"/>
            <person name="Lucas S."/>
            <person name="Copeland A."/>
            <person name="Lapidus A."/>
            <person name="Glavina del Rio T."/>
            <person name="Tice H."/>
            <person name="Bruce D."/>
            <person name="Goodwin L."/>
            <person name="Pitluck S."/>
            <person name="Sims D."/>
            <person name="Lu M."/>
            <person name="Kiss H."/>
            <person name="Meineke L."/>
            <person name="Brettin T."/>
            <person name="Detter J.C."/>
            <person name="Han C."/>
            <person name="Larimer F."/>
            <person name="Land M."/>
            <person name="Hauser L."/>
            <person name="Kyrpides N."/>
            <person name="Ovchinnikova G."/>
            <person name="Hazen T.C."/>
        </authorList>
    </citation>
    <scope>NUCLEOTIDE SEQUENCE [LARGE SCALE GENOMIC DNA]</scope>
    <source>
        <strain>ATCC 27774 / DSM 6949 / MB</strain>
    </source>
</reference>
<keyword id="KW-0067">ATP-binding</keyword>
<keyword id="KW-0315">Glutamine amidotransferase</keyword>
<keyword id="KW-0436">Ligase</keyword>
<keyword id="KW-0460">Magnesium</keyword>
<keyword id="KW-0479">Metal-binding</keyword>
<keyword id="KW-0547">Nucleotide-binding</keyword>
<keyword id="KW-0665">Pyrimidine biosynthesis</keyword>
<feature type="chain" id="PRO_1000164940" description="CTP synthase">
    <location>
        <begin position="1"/>
        <end position="547"/>
    </location>
</feature>
<feature type="domain" description="Glutamine amidotransferase type-1" evidence="1">
    <location>
        <begin position="294"/>
        <end position="547"/>
    </location>
</feature>
<feature type="region of interest" description="Amidoligase domain" evidence="1">
    <location>
        <begin position="1"/>
        <end position="269"/>
    </location>
</feature>
<feature type="active site" description="Nucleophile; for glutamine hydrolysis" evidence="1">
    <location>
        <position position="383"/>
    </location>
</feature>
<feature type="active site" evidence="1">
    <location>
        <position position="520"/>
    </location>
</feature>
<feature type="active site" evidence="1">
    <location>
        <position position="522"/>
    </location>
</feature>
<feature type="binding site" evidence="1">
    <location>
        <position position="14"/>
    </location>
    <ligand>
        <name>CTP</name>
        <dbReference type="ChEBI" id="CHEBI:37563"/>
        <note>allosteric inhibitor</note>
    </ligand>
</feature>
<feature type="binding site" evidence="1">
    <location>
        <position position="14"/>
    </location>
    <ligand>
        <name>UTP</name>
        <dbReference type="ChEBI" id="CHEBI:46398"/>
    </ligand>
</feature>
<feature type="binding site" evidence="1">
    <location>
        <begin position="15"/>
        <end position="20"/>
    </location>
    <ligand>
        <name>ATP</name>
        <dbReference type="ChEBI" id="CHEBI:30616"/>
    </ligand>
</feature>
<feature type="binding site" evidence="1">
    <location>
        <position position="72"/>
    </location>
    <ligand>
        <name>ATP</name>
        <dbReference type="ChEBI" id="CHEBI:30616"/>
    </ligand>
</feature>
<feature type="binding site" evidence="1">
    <location>
        <position position="72"/>
    </location>
    <ligand>
        <name>Mg(2+)</name>
        <dbReference type="ChEBI" id="CHEBI:18420"/>
    </ligand>
</feature>
<feature type="binding site" evidence="1">
    <location>
        <position position="143"/>
    </location>
    <ligand>
        <name>Mg(2+)</name>
        <dbReference type="ChEBI" id="CHEBI:18420"/>
    </ligand>
</feature>
<feature type="binding site" evidence="1">
    <location>
        <begin position="150"/>
        <end position="152"/>
    </location>
    <ligand>
        <name>CTP</name>
        <dbReference type="ChEBI" id="CHEBI:37563"/>
        <note>allosteric inhibitor</note>
    </ligand>
</feature>
<feature type="binding site" evidence="1">
    <location>
        <begin position="190"/>
        <end position="195"/>
    </location>
    <ligand>
        <name>CTP</name>
        <dbReference type="ChEBI" id="CHEBI:37563"/>
        <note>allosteric inhibitor</note>
    </ligand>
</feature>
<feature type="binding site" evidence="1">
    <location>
        <begin position="190"/>
        <end position="195"/>
    </location>
    <ligand>
        <name>UTP</name>
        <dbReference type="ChEBI" id="CHEBI:46398"/>
    </ligand>
</feature>
<feature type="binding site" evidence="1">
    <location>
        <position position="226"/>
    </location>
    <ligand>
        <name>CTP</name>
        <dbReference type="ChEBI" id="CHEBI:37563"/>
        <note>allosteric inhibitor</note>
    </ligand>
</feature>
<feature type="binding site" evidence="1">
    <location>
        <position position="226"/>
    </location>
    <ligand>
        <name>UTP</name>
        <dbReference type="ChEBI" id="CHEBI:46398"/>
    </ligand>
</feature>
<feature type="binding site" evidence="1">
    <location>
        <position position="356"/>
    </location>
    <ligand>
        <name>L-glutamine</name>
        <dbReference type="ChEBI" id="CHEBI:58359"/>
    </ligand>
</feature>
<feature type="binding site" evidence="1">
    <location>
        <begin position="384"/>
        <end position="387"/>
    </location>
    <ligand>
        <name>L-glutamine</name>
        <dbReference type="ChEBI" id="CHEBI:58359"/>
    </ligand>
</feature>
<feature type="binding site" evidence="1">
    <location>
        <position position="407"/>
    </location>
    <ligand>
        <name>L-glutamine</name>
        <dbReference type="ChEBI" id="CHEBI:58359"/>
    </ligand>
</feature>
<feature type="binding site" evidence="1">
    <location>
        <position position="475"/>
    </location>
    <ligand>
        <name>L-glutamine</name>
        <dbReference type="ChEBI" id="CHEBI:58359"/>
    </ligand>
</feature>
<proteinExistence type="inferred from homology"/>
<evidence type="ECO:0000255" key="1">
    <source>
        <dbReference type="HAMAP-Rule" id="MF_01227"/>
    </source>
</evidence>
<organism>
    <name type="scientific">Desulfovibrio desulfuricans (strain ATCC 27774 / DSM 6949 / MB)</name>
    <dbReference type="NCBI Taxonomy" id="525146"/>
    <lineage>
        <taxon>Bacteria</taxon>
        <taxon>Pseudomonadati</taxon>
        <taxon>Thermodesulfobacteriota</taxon>
        <taxon>Desulfovibrionia</taxon>
        <taxon>Desulfovibrionales</taxon>
        <taxon>Desulfovibrionaceae</taxon>
        <taxon>Desulfovibrio</taxon>
    </lineage>
</organism>
<gene>
    <name evidence="1" type="primary">pyrG</name>
    <name type="ordered locus">Ddes_0975</name>
</gene>
<sequence>MKTKFIFVTGGVLSSLGKGLAAASLGALLQTRGLSVTIQKLDPYINVDPGTMNPFQHGEVFVTDDGAETDLDLGHYERYLNVPMSRKNNTTSGAIYNQVIAKERHGDYLGATVQVIPHITDEIKSVVLSLAEGEDAPDVAIIEIGGTVGDIEGLPFLEAIRQLRSELGRDNCLNIHLTLVPYLRSAGEHKTKPTQHSVKELLSIGIQPDIILCRCEQSIPEELRRKIALFCNVDQDAVFSSVDVNNIYEVPLKFYAEGFDQKVAIMLRLPARNAQLDAWEKLVSDSDNPHGKVTVAIVGKYVDLKEAYKSLHEALIHGGVANRVQVDLRYVNSENVDDSNAAEHFKGCDGILVPGGFGYRGVEGKIAAIRYARENKVPFFGICLGMQCAVIEFARHMADMADANSEEFDHRSKHKVIYLMTEWYDFRTRNVEKRDAGSDKGGTMRLGSYPCKVMPESRAFEAYKTDMVEERHRHRYEFNNEFKEALAEKGMIFSGTSPDGSLMEIIELPEHPWFLGCQFHPEFKSRPMNAHPLFREFIGAAKKHAKV</sequence>
<protein>
    <recommendedName>
        <fullName evidence="1">CTP synthase</fullName>
        <ecNumber evidence="1">6.3.4.2</ecNumber>
    </recommendedName>
    <alternativeName>
        <fullName evidence="1">Cytidine 5'-triphosphate synthase</fullName>
    </alternativeName>
    <alternativeName>
        <fullName evidence="1">Cytidine triphosphate synthetase</fullName>
        <shortName evidence="1">CTP synthetase</shortName>
        <shortName evidence="1">CTPS</shortName>
    </alternativeName>
    <alternativeName>
        <fullName evidence="1">UTP--ammonia ligase</fullName>
    </alternativeName>
</protein>